<gene>
    <name evidence="1" type="primary">rplV</name>
    <name type="ordered locus">CPS_0868</name>
</gene>
<reference key="1">
    <citation type="journal article" date="2005" name="Proc. Natl. Acad. Sci. U.S.A.">
        <title>The psychrophilic lifestyle as revealed by the genome sequence of Colwellia psychrerythraea 34H through genomic and proteomic analyses.</title>
        <authorList>
            <person name="Methe B.A."/>
            <person name="Nelson K.E."/>
            <person name="Deming J.W."/>
            <person name="Momen B."/>
            <person name="Melamud E."/>
            <person name="Zhang X."/>
            <person name="Moult J."/>
            <person name="Madupu R."/>
            <person name="Nelson W.C."/>
            <person name="Dodson R.J."/>
            <person name="Brinkac L.M."/>
            <person name="Daugherty S.C."/>
            <person name="Durkin A.S."/>
            <person name="DeBoy R.T."/>
            <person name="Kolonay J.F."/>
            <person name="Sullivan S.A."/>
            <person name="Zhou L."/>
            <person name="Davidsen T.M."/>
            <person name="Wu M."/>
            <person name="Huston A.L."/>
            <person name="Lewis M."/>
            <person name="Weaver B."/>
            <person name="Weidman J.F."/>
            <person name="Khouri H."/>
            <person name="Utterback T.R."/>
            <person name="Feldblyum T.V."/>
            <person name="Fraser C.M."/>
        </authorList>
    </citation>
    <scope>NUCLEOTIDE SEQUENCE [LARGE SCALE GENOMIC DNA]</scope>
    <source>
        <strain>34H / ATCC BAA-681</strain>
    </source>
</reference>
<proteinExistence type="inferred from homology"/>
<keyword id="KW-0687">Ribonucleoprotein</keyword>
<keyword id="KW-0689">Ribosomal protein</keyword>
<keyword id="KW-0694">RNA-binding</keyword>
<keyword id="KW-0699">rRNA-binding</keyword>
<organism>
    <name type="scientific">Colwellia psychrerythraea (strain 34H / ATCC BAA-681)</name>
    <name type="common">Vibrio psychroerythus</name>
    <dbReference type="NCBI Taxonomy" id="167879"/>
    <lineage>
        <taxon>Bacteria</taxon>
        <taxon>Pseudomonadati</taxon>
        <taxon>Pseudomonadota</taxon>
        <taxon>Gammaproteobacteria</taxon>
        <taxon>Alteromonadales</taxon>
        <taxon>Colwelliaceae</taxon>
        <taxon>Colwellia</taxon>
    </lineage>
</organism>
<evidence type="ECO:0000255" key="1">
    <source>
        <dbReference type="HAMAP-Rule" id="MF_01331"/>
    </source>
</evidence>
<evidence type="ECO:0000305" key="2"/>
<sequence>MQAIAIHKFARGSAQKARLVADQIRGVNVEKALEILTFSNKKAAELVKKVLNSAIANAEHNEGADIDELFVKTILIDDGPTMKRIMPRAKGRADRIIKRTSHITVIVSDS</sequence>
<accession>Q487Z8</accession>
<name>RL22_COLP3</name>
<dbReference type="EMBL" id="CP000083">
    <property type="protein sequence ID" value="AAZ27318.1"/>
    <property type="molecule type" value="Genomic_DNA"/>
</dbReference>
<dbReference type="RefSeq" id="WP_011041717.1">
    <property type="nucleotide sequence ID" value="NC_003910.7"/>
</dbReference>
<dbReference type="SMR" id="Q487Z8"/>
<dbReference type="STRING" id="167879.CPS_0868"/>
<dbReference type="KEGG" id="cps:CPS_0868"/>
<dbReference type="eggNOG" id="COG0091">
    <property type="taxonomic scope" value="Bacteria"/>
</dbReference>
<dbReference type="HOGENOM" id="CLU_083987_3_3_6"/>
<dbReference type="Proteomes" id="UP000000547">
    <property type="component" value="Chromosome"/>
</dbReference>
<dbReference type="GO" id="GO:0022625">
    <property type="term" value="C:cytosolic large ribosomal subunit"/>
    <property type="evidence" value="ECO:0007669"/>
    <property type="project" value="TreeGrafter"/>
</dbReference>
<dbReference type="GO" id="GO:0019843">
    <property type="term" value="F:rRNA binding"/>
    <property type="evidence" value="ECO:0007669"/>
    <property type="project" value="UniProtKB-UniRule"/>
</dbReference>
<dbReference type="GO" id="GO:0003735">
    <property type="term" value="F:structural constituent of ribosome"/>
    <property type="evidence" value="ECO:0007669"/>
    <property type="project" value="InterPro"/>
</dbReference>
<dbReference type="GO" id="GO:0006412">
    <property type="term" value="P:translation"/>
    <property type="evidence" value="ECO:0007669"/>
    <property type="project" value="UniProtKB-UniRule"/>
</dbReference>
<dbReference type="CDD" id="cd00336">
    <property type="entry name" value="Ribosomal_L22"/>
    <property type="match status" value="1"/>
</dbReference>
<dbReference type="FunFam" id="3.90.470.10:FF:000001">
    <property type="entry name" value="50S ribosomal protein L22"/>
    <property type="match status" value="1"/>
</dbReference>
<dbReference type="Gene3D" id="3.90.470.10">
    <property type="entry name" value="Ribosomal protein L22/L17"/>
    <property type="match status" value="1"/>
</dbReference>
<dbReference type="HAMAP" id="MF_01331_B">
    <property type="entry name" value="Ribosomal_uL22_B"/>
    <property type="match status" value="1"/>
</dbReference>
<dbReference type="InterPro" id="IPR001063">
    <property type="entry name" value="Ribosomal_uL22"/>
</dbReference>
<dbReference type="InterPro" id="IPR005727">
    <property type="entry name" value="Ribosomal_uL22_bac/chlpt-type"/>
</dbReference>
<dbReference type="InterPro" id="IPR047867">
    <property type="entry name" value="Ribosomal_uL22_bac/org-type"/>
</dbReference>
<dbReference type="InterPro" id="IPR018260">
    <property type="entry name" value="Ribosomal_uL22_CS"/>
</dbReference>
<dbReference type="InterPro" id="IPR036394">
    <property type="entry name" value="Ribosomal_uL22_sf"/>
</dbReference>
<dbReference type="NCBIfam" id="TIGR01044">
    <property type="entry name" value="rplV_bact"/>
    <property type="match status" value="1"/>
</dbReference>
<dbReference type="PANTHER" id="PTHR13501">
    <property type="entry name" value="CHLOROPLAST 50S RIBOSOMAL PROTEIN L22-RELATED"/>
    <property type="match status" value="1"/>
</dbReference>
<dbReference type="PANTHER" id="PTHR13501:SF8">
    <property type="entry name" value="LARGE RIBOSOMAL SUBUNIT PROTEIN UL22M"/>
    <property type="match status" value="1"/>
</dbReference>
<dbReference type="Pfam" id="PF00237">
    <property type="entry name" value="Ribosomal_L22"/>
    <property type="match status" value="1"/>
</dbReference>
<dbReference type="SUPFAM" id="SSF54843">
    <property type="entry name" value="Ribosomal protein L22"/>
    <property type="match status" value="1"/>
</dbReference>
<dbReference type="PROSITE" id="PS00464">
    <property type="entry name" value="RIBOSOMAL_L22"/>
    <property type="match status" value="1"/>
</dbReference>
<comment type="function">
    <text evidence="1">This protein binds specifically to 23S rRNA; its binding is stimulated by other ribosomal proteins, e.g. L4, L17, and L20. It is important during the early stages of 50S assembly. It makes multiple contacts with different domains of the 23S rRNA in the assembled 50S subunit and ribosome (By similarity).</text>
</comment>
<comment type="function">
    <text evidence="1">The globular domain of the protein is located near the polypeptide exit tunnel on the outside of the subunit, while an extended beta-hairpin is found that lines the wall of the exit tunnel in the center of the 70S ribosome.</text>
</comment>
<comment type="subunit">
    <text evidence="1">Part of the 50S ribosomal subunit.</text>
</comment>
<comment type="similarity">
    <text evidence="1">Belongs to the universal ribosomal protein uL22 family.</text>
</comment>
<feature type="chain" id="PRO_0000243141" description="Large ribosomal subunit protein uL22">
    <location>
        <begin position="1"/>
        <end position="110"/>
    </location>
</feature>
<protein>
    <recommendedName>
        <fullName evidence="1">Large ribosomal subunit protein uL22</fullName>
    </recommendedName>
    <alternativeName>
        <fullName evidence="2">50S ribosomal protein L22</fullName>
    </alternativeName>
</protein>